<evidence type="ECO:0000255" key="1">
    <source>
        <dbReference type="HAMAP-Rule" id="MF_00303"/>
    </source>
</evidence>
<accession>A5ID18</accession>
<comment type="function">
    <text evidence="1">Involved in protein export. Acts as a chaperone by maintaining the newly synthesized protein in an open conformation. Functions as a peptidyl-prolyl cis-trans isomerase.</text>
</comment>
<comment type="catalytic activity">
    <reaction evidence="1">
        <text>[protein]-peptidylproline (omega=180) = [protein]-peptidylproline (omega=0)</text>
        <dbReference type="Rhea" id="RHEA:16237"/>
        <dbReference type="Rhea" id="RHEA-COMP:10747"/>
        <dbReference type="Rhea" id="RHEA-COMP:10748"/>
        <dbReference type="ChEBI" id="CHEBI:83833"/>
        <dbReference type="ChEBI" id="CHEBI:83834"/>
        <dbReference type="EC" id="5.2.1.8"/>
    </reaction>
</comment>
<comment type="subcellular location">
    <subcellularLocation>
        <location>Cytoplasm</location>
    </subcellularLocation>
    <text evidence="1">About half TF is bound to the ribosome near the polypeptide exit tunnel while the other half is free in the cytoplasm.</text>
</comment>
<comment type="domain">
    <text evidence="1">Consists of 3 domains; the N-terminus binds the ribosome, the middle domain has PPIase activity, while the C-terminus has intrinsic chaperone activity on its own.</text>
</comment>
<comment type="similarity">
    <text evidence="1">Belongs to the FKBP-type PPIase family. Tig subfamily.</text>
</comment>
<gene>
    <name evidence="1" type="primary">tig</name>
    <name type="ordered locus">LPC_1307</name>
</gene>
<protein>
    <recommendedName>
        <fullName evidence="1">Trigger factor</fullName>
        <shortName evidence="1">TF</shortName>
        <ecNumber evidence="1">5.2.1.8</ecNumber>
    </recommendedName>
    <alternativeName>
        <fullName evidence="1">PPIase</fullName>
    </alternativeName>
</protein>
<feature type="chain" id="PRO_1000022700" description="Trigger factor">
    <location>
        <begin position="1"/>
        <end position="459"/>
    </location>
</feature>
<feature type="domain" description="PPIase FKBP-type" evidence="1">
    <location>
        <begin position="161"/>
        <end position="246"/>
    </location>
</feature>
<name>TIG_LEGPC</name>
<dbReference type="EC" id="5.2.1.8" evidence="1"/>
<dbReference type="EMBL" id="CP000675">
    <property type="protein sequence ID" value="ABQ55268.1"/>
    <property type="molecule type" value="Genomic_DNA"/>
</dbReference>
<dbReference type="RefSeq" id="WP_011946768.1">
    <property type="nucleotide sequence ID" value="NC_009494.2"/>
</dbReference>
<dbReference type="SMR" id="A5ID18"/>
<dbReference type="KEGG" id="lpc:LPC_1307"/>
<dbReference type="HOGENOM" id="CLU_033058_2_0_6"/>
<dbReference type="GO" id="GO:0005737">
    <property type="term" value="C:cytoplasm"/>
    <property type="evidence" value="ECO:0007669"/>
    <property type="project" value="UniProtKB-SubCell"/>
</dbReference>
<dbReference type="GO" id="GO:0003755">
    <property type="term" value="F:peptidyl-prolyl cis-trans isomerase activity"/>
    <property type="evidence" value="ECO:0007669"/>
    <property type="project" value="UniProtKB-UniRule"/>
</dbReference>
<dbReference type="GO" id="GO:0044183">
    <property type="term" value="F:protein folding chaperone"/>
    <property type="evidence" value="ECO:0007669"/>
    <property type="project" value="TreeGrafter"/>
</dbReference>
<dbReference type="GO" id="GO:0043022">
    <property type="term" value="F:ribosome binding"/>
    <property type="evidence" value="ECO:0007669"/>
    <property type="project" value="TreeGrafter"/>
</dbReference>
<dbReference type="GO" id="GO:0051083">
    <property type="term" value="P:'de novo' cotranslational protein folding"/>
    <property type="evidence" value="ECO:0007669"/>
    <property type="project" value="TreeGrafter"/>
</dbReference>
<dbReference type="GO" id="GO:0051301">
    <property type="term" value="P:cell division"/>
    <property type="evidence" value="ECO:0007669"/>
    <property type="project" value="UniProtKB-KW"/>
</dbReference>
<dbReference type="GO" id="GO:0061077">
    <property type="term" value="P:chaperone-mediated protein folding"/>
    <property type="evidence" value="ECO:0007669"/>
    <property type="project" value="TreeGrafter"/>
</dbReference>
<dbReference type="GO" id="GO:0015031">
    <property type="term" value="P:protein transport"/>
    <property type="evidence" value="ECO:0007669"/>
    <property type="project" value="UniProtKB-UniRule"/>
</dbReference>
<dbReference type="GO" id="GO:0043335">
    <property type="term" value="P:protein unfolding"/>
    <property type="evidence" value="ECO:0007669"/>
    <property type="project" value="TreeGrafter"/>
</dbReference>
<dbReference type="FunFam" id="3.10.50.40:FF:000001">
    <property type="entry name" value="Trigger factor"/>
    <property type="match status" value="1"/>
</dbReference>
<dbReference type="Gene3D" id="3.10.50.40">
    <property type="match status" value="1"/>
</dbReference>
<dbReference type="Gene3D" id="3.30.70.1050">
    <property type="entry name" value="Trigger factor ribosome-binding domain"/>
    <property type="match status" value="1"/>
</dbReference>
<dbReference type="Gene3D" id="1.10.3120.10">
    <property type="entry name" value="Trigger factor, C-terminal domain"/>
    <property type="match status" value="1"/>
</dbReference>
<dbReference type="HAMAP" id="MF_00303">
    <property type="entry name" value="Trigger_factor_Tig"/>
    <property type="match status" value="1"/>
</dbReference>
<dbReference type="InterPro" id="IPR046357">
    <property type="entry name" value="PPIase_dom_sf"/>
</dbReference>
<dbReference type="InterPro" id="IPR001179">
    <property type="entry name" value="PPIase_FKBP_dom"/>
</dbReference>
<dbReference type="InterPro" id="IPR005215">
    <property type="entry name" value="Trig_fac"/>
</dbReference>
<dbReference type="InterPro" id="IPR008880">
    <property type="entry name" value="Trigger_fac_C"/>
</dbReference>
<dbReference type="InterPro" id="IPR037041">
    <property type="entry name" value="Trigger_fac_C_sf"/>
</dbReference>
<dbReference type="InterPro" id="IPR008881">
    <property type="entry name" value="Trigger_fac_ribosome-bd_bac"/>
</dbReference>
<dbReference type="InterPro" id="IPR036611">
    <property type="entry name" value="Trigger_fac_ribosome-bd_sf"/>
</dbReference>
<dbReference type="InterPro" id="IPR027304">
    <property type="entry name" value="Trigger_fact/SurA_dom_sf"/>
</dbReference>
<dbReference type="NCBIfam" id="TIGR00115">
    <property type="entry name" value="tig"/>
    <property type="match status" value="1"/>
</dbReference>
<dbReference type="PANTHER" id="PTHR30560">
    <property type="entry name" value="TRIGGER FACTOR CHAPERONE AND PEPTIDYL-PROLYL CIS/TRANS ISOMERASE"/>
    <property type="match status" value="1"/>
</dbReference>
<dbReference type="PANTHER" id="PTHR30560:SF3">
    <property type="entry name" value="TRIGGER FACTOR-LIKE PROTEIN TIG, CHLOROPLASTIC"/>
    <property type="match status" value="1"/>
</dbReference>
<dbReference type="Pfam" id="PF00254">
    <property type="entry name" value="FKBP_C"/>
    <property type="match status" value="1"/>
</dbReference>
<dbReference type="Pfam" id="PF05698">
    <property type="entry name" value="Trigger_C"/>
    <property type="match status" value="1"/>
</dbReference>
<dbReference type="Pfam" id="PF05697">
    <property type="entry name" value="Trigger_N"/>
    <property type="match status" value="1"/>
</dbReference>
<dbReference type="PIRSF" id="PIRSF003095">
    <property type="entry name" value="Trigger_factor"/>
    <property type="match status" value="1"/>
</dbReference>
<dbReference type="SUPFAM" id="SSF54534">
    <property type="entry name" value="FKBP-like"/>
    <property type="match status" value="1"/>
</dbReference>
<dbReference type="SUPFAM" id="SSF109998">
    <property type="entry name" value="Triger factor/SurA peptide-binding domain-like"/>
    <property type="match status" value="1"/>
</dbReference>
<dbReference type="SUPFAM" id="SSF102735">
    <property type="entry name" value="Trigger factor ribosome-binding domain"/>
    <property type="match status" value="1"/>
</dbReference>
<dbReference type="PROSITE" id="PS50059">
    <property type="entry name" value="FKBP_PPIASE"/>
    <property type="match status" value="1"/>
</dbReference>
<organism>
    <name type="scientific">Legionella pneumophila (strain Corby)</name>
    <dbReference type="NCBI Taxonomy" id="400673"/>
    <lineage>
        <taxon>Bacteria</taxon>
        <taxon>Pseudomonadati</taxon>
        <taxon>Pseudomonadota</taxon>
        <taxon>Gammaproteobacteria</taxon>
        <taxon>Legionellales</taxon>
        <taxon>Legionellaceae</taxon>
        <taxon>Legionella</taxon>
    </lineage>
</organism>
<proteinExistence type="inferred from homology"/>
<keyword id="KW-0131">Cell cycle</keyword>
<keyword id="KW-0132">Cell division</keyword>
<keyword id="KW-0143">Chaperone</keyword>
<keyword id="KW-0963">Cytoplasm</keyword>
<keyword id="KW-0413">Isomerase</keyword>
<keyword id="KW-0697">Rotamase</keyword>
<sequence length="459" mass="52462">MQVSVETLEGLERKVTVSVPTEKVEEEVSSRLRNLARKVKIDGFRPGKVPFNVVKSRFSDSVREEVAREMVQSTLYEALQKNELVPAGYPHVEPLEIEPGKDFKYTAVFEVMPVFEIVELNQAPVELIQSEVTDKDVDNMIEKLREQNKEWHEVTHAVKKGDKVVIDFQGFLDDKPFQGGSAEGYELVIGSGSMIPGFEDGIVGGKIDKPFDIKVSFPEDYGHKDLAGKEATFKITIKKIMEGKLPALDEAFAEKFNIKEGGIESLKKDIRENMARELERRVNMMNREKLFDSLMSVNHVELPIALIDKEIEHLKHDMYHRLFGHEHKDDEKIPDFPRELFEEQAKRRVHLGLLFAEYVKKHEIVADNDKVNAMIDKFASAYESPDELRAWYQSSKEHMAEVEALVMEDMVADKIAEDAKLKYKNMDYDSVMNPKKGTEKKGELACQAIQIILSVMQAD</sequence>
<reference key="1">
    <citation type="submission" date="2006-11" db="EMBL/GenBank/DDBJ databases">
        <title>Identification and characterization of a new conjugation/ type IVA secretion system (trb/tra) of L. pneumophila Corby localized on a mobile genomic island.</title>
        <authorList>
            <person name="Gloeckner G."/>
            <person name="Albert-Weissenberger C."/>
            <person name="Weinmann E."/>
            <person name="Jacobi S."/>
            <person name="Schunder E."/>
            <person name="Steinert M."/>
            <person name="Buchrieser C."/>
            <person name="Hacker J."/>
            <person name="Heuner K."/>
        </authorList>
    </citation>
    <scope>NUCLEOTIDE SEQUENCE [LARGE SCALE GENOMIC DNA]</scope>
    <source>
        <strain>Corby</strain>
    </source>
</reference>